<proteinExistence type="evidence at transcript level"/>
<name>ALBU1_SALSA</name>
<dbReference type="EMBL" id="X52397">
    <property type="protein sequence ID" value="CAA36643.1"/>
    <property type="molecule type" value="mRNA"/>
</dbReference>
<dbReference type="PIR" id="A36238">
    <property type="entry name" value="ABONS1"/>
</dbReference>
<dbReference type="RefSeq" id="NP_001117137.1">
    <property type="nucleotide sequence ID" value="NM_001123665.1"/>
</dbReference>
<dbReference type="SMR" id="P21848"/>
<dbReference type="STRING" id="8030.ENSSSAP00000093436"/>
<dbReference type="GlyCosmos" id="P21848">
    <property type="glycosylation" value="1 site, No reported glycans"/>
</dbReference>
<dbReference type="PaxDb" id="8030-ENSSSAP00000093436"/>
<dbReference type="Ensembl" id="ENSSSAT00070004593">
    <property type="protein sequence ID" value="ENSSSAP00070004235"/>
    <property type="gene ID" value="ENSSSAG00070003206"/>
</dbReference>
<dbReference type="GeneID" id="100136575"/>
<dbReference type="KEGG" id="sasa:100136575"/>
<dbReference type="CTD" id="100136575"/>
<dbReference type="OrthoDB" id="472848at7898"/>
<dbReference type="Proteomes" id="UP000087266">
    <property type="component" value="Chromosome ssa01"/>
</dbReference>
<dbReference type="GO" id="GO:0072562">
    <property type="term" value="C:blood microparticle"/>
    <property type="evidence" value="ECO:0007669"/>
    <property type="project" value="TreeGrafter"/>
</dbReference>
<dbReference type="GO" id="GO:0005737">
    <property type="term" value="C:cytoplasm"/>
    <property type="evidence" value="ECO:0007669"/>
    <property type="project" value="TreeGrafter"/>
</dbReference>
<dbReference type="GO" id="GO:0008289">
    <property type="term" value="F:lipid binding"/>
    <property type="evidence" value="ECO:0007669"/>
    <property type="project" value="UniProtKB-KW"/>
</dbReference>
<dbReference type="GO" id="GO:0046872">
    <property type="term" value="F:metal ion binding"/>
    <property type="evidence" value="ECO:0007669"/>
    <property type="project" value="UniProtKB-KW"/>
</dbReference>
<dbReference type="CDD" id="cd00015">
    <property type="entry name" value="ALBUMIN"/>
    <property type="match status" value="3"/>
</dbReference>
<dbReference type="Gene3D" id="1.10.246.10">
    <property type="match status" value="6"/>
</dbReference>
<dbReference type="InterPro" id="IPR000264">
    <property type="entry name" value="ALB/AFP/VDB"/>
</dbReference>
<dbReference type="InterPro" id="IPR020858">
    <property type="entry name" value="Serum_albumin-like"/>
</dbReference>
<dbReference type="InterPro" id="IPR021177">
    <property type="entry name" value="Serum_albumin/AFP/Afamin"/>
</dbReference>
<dbReference type="InterPro" id="IPR020857">
    <property type="entry name" value="Serum_albumin_CS"/>
</dbReference>
<dbReference type="InterPro" id="IPR014760">
    <property type="entry name" value="Serum_albumin_N"/>
</dbReference>
<dbReference type="PANTHER" id="PTHR11385:SF14">
    <property type="entry name" value="AFAMIN"/>
    <property type="match status" value="1"/>
</dbReference>
<dbReference type="PANTHER" id="PTHR11385">
    <property type="entry name" value="SERUM ALBUMIN-RELATED"/>
    <property type="match status" value="1"/>
</dbReference>
<dbReference type="Pfam" id="PF00273">
    <property type="entry name" value="Serum_albumin"/>
    <property type="match status" value="3"/>
</dbReference>
<dbReference type="PIRSF" id="PIRSF002520">
    <property type="entry name" value="Serum_albumin_subgroup"/>
    <property type="match status" value="1"/>
</dbReference>
<dbReference type="PRINTS" id="PR00802">
    <property type="entry name" value="SERUMALBUMIN"/>
</dbReference>
<dbReference type="SMART" id="SM00103">
    <property type="entry name" value="ALBUMIN"/>
    <property type="match status" value="3"/>
</dbReference>
<dbReference type="SUPFAM" id="SSF48552">
    <property type="entry name" value="Serum albumin-like"/>
    <property type="match status" value="3"/>
</dbReference>
<dbReference type="PROSITE" id="PS00212">
    <property type="entry name" value="ALBUMIN_1"/>
    <property type="match status" value="2"/>
</dbReference>
<dbReference type="PROSITE" id="PS51438">
    <property type="entry name" value="ALBUMIN_2"/>
    <property type="match status" value="3"/>
</dbReference>
<comment type="function">
    <text>Binds water, Ca(2+), Na(+), K(+), fatty acids, hormones, bilirubin and drugs. Its main function is the regulation of the colloidal osmotic pressure of blood.</text>
</comment>
<comment type="subcellular location">
    <subcellularLocation>
        <location>Secreted</location>
    </subcellularLocation>
</comment>
<comment type="tissue specificity">
    <text>Plasma.</text>
</comment>
<comment type="similarity">
    <text evidence="2">Belongs to the ALB/AFP/VDB family.</text>
</comment>
<reference key="1">
    <citation type="journal article" date="1990" name="DNA Cell Biol.">
        <title>Atlantic salmon (Salmo salar) serum albumin: cDNA sequence, evolution, and tissue expression.</title>
        <authorList>
            <person name="Byrnes L."/>
            <person name="Gannon F."/>
        </authorList>
    </citation>
    <scope>NUCLEOTIDE SEQUENCE [MRNA]</scope>
    <source>
        <tissue>Liver</tissue>
    </source>
</reference>
<organism>
    <name type="scientific">Salmo salar</name>
    <name type="common">Atlantic salmon</name>
    <dbReference type="NCBI Taxonomy" id="8030"/>
    <lineage>
        <taxon>Eukaryota</taxon>
        <taxon>Metazoa</taxon>
        <taxon>Chordata</taxon>
        <taxon>Craniata</taxon>
        <taxon>Vertebrata</taxon>
        <taxon>Euteleostomi</taxon>
        <taxon>Actinopterygii</taxon>
        <taxon>Neopterygii</taxon>
        <taxon>Teleostei</taxon>
        <taxon>Protacanthopterygii</taxon>
        <taxon>Salmoniformes</taxon>
        <taxon>Salmonidae</taxon>
        <taxon>Salmoninae</taxon>
        <taxon>Salmo</taxon>
    </lineage>
</organism>
<feature type="signal peptide" evidence="1">
    <location>
        <begin position="1"/>
        <end position="14"/>
    </location>
</feature>
<feature type="propeptide" id="PRO_0000001085">
    <location>
        <begin position="15"/>
        <end position="18"/>
    </location>
</feature>
<feature type="chain" id="PRO_0000001086" description="Albumin 1">
    <location>
        <begin position="19"/>
        <end position="608"/>
    </location>
</feature>
<feature type="domain" description="Albumin 1" evidence="2">
    <location>
        <begin position="19"/>
        <end position="205"/>
    </location>
</feature>
<feature type="domain" description="Albumin 2" evidence="2">
    <location>
        <begin position="206"/>
        <end position="398"/>
    </location>
</feature>
<feature type="domain" description="Albumin 3" evidence="2">
    <location>
        <begin position="402"/>
        <end position="600"/>
    </location>
</feature>
<feature type="glycosylation site" description="N-linked (GlcNAc...) asparagine" evidence="1">
    <location>
        <position position="501"/>
    </location>
</feature>
<feature type="disulfide bond" evidence="2">
    <location>
        <begin position="26"/>
        <end position="72"/>
    </location>
</feature>
<feature type="disulfide bond" evidence="2">
    <location>
        <begin position="71"/>
        <end position="80"/>
    </location>
</feature>
<feature type="disulfide bond" evidence="2">
    <location>
        <begin position="93"/>
        <end position="108"/>
    </location>
</feature>
<feature type="disulfide bond" evidence="2">
    <location>
        <begin position="107"/>
        <end position="118"/>
    </location>
</feature>
<feature type="disulfide bond" evidence="2">
    <location>
        <begin position="142"/>
        <end position="187"/>
    </location>
</feature>
<feature type="disulfide bond" evidence="2">
    <location>
        <begin position="186"/>
        <end position="195"/>
    </location>
</feature>
<feature type="disulfide bond" evidence="2">
    <location>
        <begin position="218"/>
        <end position="264"/>
    </location>
</feature>
<feature type="disulfide bond" evidence="2">
    <location>
        <begin position="263"/>
        <end position="271"/>
    </location>
</feature>
<feature type="disulfide bond" evidence="2">
    <location>
        <begin position="283"/>
        <end position="299"/>
    </location>
</feature>
<feature type="disulfide bond" evidence="2">
    <location>
        <begin position="298"/>
        <end position="309"/>
    </location>
</feature>
<feature type="disulfide bond" evidence="2">
    <location>
        <begin position="336"/>
        <end position="381"/>
    </location>
</feature>
<feature type="disulfide bond" evidence="2">
    <location>
        <begin position="380"/>
        <end position="389"/>
    </location>
</feature>
<feature type="disulfide bond" evidence="2">
    <location>
        <begin position="414"/>
        <end position="460"/>
    </location>
</feature>
<feature type="disulfide bond" evidence="2">
    <location>
        <begin position="459"/>
        <end position="471"/>
    </location>
</feature>
<feature type="disulfide bond" evidence="2">
    <location>
        <begin position="484"/>
        <end position="500"/>
    </location>
</feature>
<feature type="disulfide bond" evidence="2">
    <location>
        <begin position="499"/>
        <end position="510"/>
    </location>
</feature>
<feature type="disulfide bond" evidence="2">
    <location>
        <begin position="537"/>
        <end position="582"/>
    </location>
</feature>
<feature type="disulfide bond" evidence="2">
    <location>
        <begin position="581"/>
        <end position="590"/>
    </location>
</feature>
<evidence type="ECO:0000255" key="1"/>
<evidence type="ECO:0000255" key="2">
    <source>
        <dbReference type="PROSITE-ProRule" id="PRU00769"/>
    </source>
</evidence>
<protein>
    <recommendedName>
        <fullName>Albumin 1</fullName>
    </recommendedName>
</protein>
<sequence>MQWLSVCSLLVLLSVLSRSQAQNQICTIFTEAKEDGFKSLILVGLAQNLPDSTLGDLVPLIAEALAMGVKCCSDTPPEDCERDVADLFQSAVCSSETLVEKNDLKMCCEKTAAERTHCFVDHKAKIPRDLSLKAELPAADQCEDFKKDHKAFVGRFIFKFSKSNPMLPPHVVLAIAKGYGEVLTTCCGEAEAQTCFDTKKATFQHAVMKRVAELRSLCIVHKKYGDRVVKAKKLVQYSQKMPQASFQEMGGMVDKIVATVAPCCSGDMVTCMKERKTLVDEVCADESVLSRAAGLSACCKEDAVHRGSCVEAMKPDPKPDGLSEHYDIHADIAAVCQTFTKTPDVAMGKLVYEISVRHPESSQQVILRFAKEAEQALLQCCDMEDHAECVKTALAGSDIDKKITDETDYYKKMCAAEAAVSDDSFEKSMMVYYTRIMPQASFDQLHMVSETVHDVLHACCKDEQGHFVLPCAEEKLTDAIDATCDDYDPSSINPHIAHCCNQSYSMRRHCILAIQPDTEFTPPELDASSFHMGPELCTKDSKDLLLSGKKLLYGVVRHKTTITEDHLKTISTKYHTMKEKCCAAEDQAACFTEEAPKLVSESAELVKV</sequence>
<keyword id="KW-1015">Disulfide bond</keyword>
<keyword id="KW-0325">Glycoprotein</keyword>
<keyword id="KW-0446">Lipid-binding</keyword>
<keyword id="KW-0479">Metal-binding</keyword>
<keyword id="KW-1185">Reference proteome</keyword>
<keyword id="KW-0677">Repeat</keyword>
<keyword id="KW-0964">Secreted</keyword>
<keyword id="KW-0732">Signal</keyword>
<gene>
    <name type="primary">alb1</name>
</gene>
<accession>P21848</accession>